<accession>A9MTR2</accession>
<reference key="1">
    <citation type="submission" date="2007-11" db="EMBL/GenBank/DDBJ databases">
        <authorList>
            <consortium name="The Salmonella enterica serovar Paratyphi B Genome Sequencing Project"/>
            <person name="McClelland M."/>
            <person name="Sanderson E.K."/>
            <person name="Porwollik S."/>
            <person name="Spieth J."/>
            <person name="Clifton W.S."/>
            <person name="Fulton R."/>
            <person name="Cordes M."/>
            <person name="Wollam A."/>
            <person name="Shah N."/>
            <person name="Pepin K."/>
            <person name="Bhonagiri V."/>
            <person name="Nash W."/>
            <person name="Johnson M."/>
            <person name="Thiruvilangam P."/>
            <person name="Wilson R."/>
        </authorList>
    </citation>
    <scope>NUCLEOTIDE SEQUENCE [LARGE SCALE GENOMIC DNA]</scope>
    <source>
        <strain>ATCC BAA-1250 / SPB7</strain>
    </source>
</reference>
<proteinExistence type="inferred from homology"/>
<evidence type="ECO:0000255" key="1">
    <source>
        <dbReference type="HAMAP-Rule" id="MF_01253"/>
    </source>
</evidence>
<feature type="initiator methionine" description="Removed" evidence="1">
    <location>
        <position position="1"/>
    </location>
</feature>
<feature type="chain" id="PRO_1000085802" description="Endonuclease 8">
    <location>
        <begin position="2"/>
        <end position="263"/>
    </location>
</feature>
<feature type="zinc finger region" description="FPG-type" evidence="1">
    <location>
        <begin position="229"/>
        <end position="263"/>
    </location>
</feature>
<feature type="active site" description="Schiff-base intermediate with DNA" evidence="1">
    <location>
        <position position="2"/>
    </location>
</feature>
<feature type="active site" description="Proton donor" evidence="1">
    <location>
        <position position="3"/>
    </location>
</feature>
<feature type="active site" description="Proton donor; for beta-elimination activity" evidence="1">
    <location>
        <position position="53"/>
    </location>
</feature>
<feature type="active site" description="Proton donor; for delta-elimination activity" evidence="1">
    <location>
        <position position="253"/>
    </location>
</feature>
<feature type="binding site" evidence="1">
    <location>
        <position position="70"/>
    </location>
    <ligand>
        <name>DNA</name>
        <dbReference type="ChEBI" id="CHEBI:16991"/>
    </ligand>
</feature>
<feature type="binding site" evidence="1">
    <location>
        <position position="125"/>
    </location>
    <ligand>
        <name>DNA</name>
        <dbReference type="ChEBI" id="CHEBI:16991"/>
    </ligand>
</feature>
<feature type="binding site" evidence="1">
    <location>
        <position position="169"/>
    </location>
    <ligand>
        <name>DNA</name>
        <dbReference type="ChEBI" id="CHEBI:16991"/>
    </ligand>
</feature>
<organism>
    <name type="scientific">Salmonella paratyphi B (strain ATCC BAA-1250 / SPB7)</name>
    <dbReference type="NCBI Taxonomy" id="1016998"/>
    <lineage>
        <taxon>Bacteria</taxon>
        <taxon>Pseudomonadati</taxon>
        <taxon>Pseudomonadota</taxon>
        <taxon>Gammaproteobacteria</taxon>
        <taxon>Enterobacterales</taxon>
        <taxon>Enterobacteriaceae</taxon>
        <taxon>Salmonella</taxon>
    </lineage>
</organism>
<protein>
    <recommendedName>
        <fullName evidence="1">Endonuclease 8</fullName>
    </recommendedName>
    <alternativeName>
        <fullName evidence="1">DNA glycosylase/AP lyase Nei</fullName>
        <ecNumber evidence="1">3.2.2.-</ecNumber>
        <ecNumber evidence="1">4.2.99.18</ecNumber>
    </alternativeName>
    <alternativeName>
        <fullName evidence="1">DNA-(apurinic or apyrimidinic site) lyase Nei</fullName>
    </alternativeName>
    <alternativeName>
        <fullName evidence="1">Endonuclease VIII</fullName>
    </alternativeName>
</protein>
<dbReference type="EC" id="3.2.2.-" evidence="1"/>
<dbReference type="EC" id="4.2.99.18" evidence="1"/>
<dbReference type="EMBL" id="CP000886">
    <property type="protein sequence ID" value="ABX68177.1"/>
    <property type="molecule type" value="Genomic_DNA"/>
</dbReference>
<dbReference type="RefSeq" id="WP_001113966.1">
    <property type="nucleotide sequence ID" value="NC_010102.1"/>
</dbReference>
<dbReference type="SMR" id="A9MTR2"/>
<dbReference type="KEGG" id="spq:SPAB_02805"/>
<dbReference type="PATRIC" id="fig|1016998.12.peg.2651"/>
<dbReference type="HOGENOM" id="CLU_038423_2_2_6"/>
<dbReference type="BioCyc" id="SENT1016998:SPAB_RS11410-MONOMER"/>
<dbReference type="Proteomes" id="UP000008556">
    <property type="component" value="Chromosome"/>
</dbReference>
<dbReference type="GO" id="GO:0140078">
    <property type="term" value="F:class I DNA-(apurinic or apyrimidinic site) endonuclease activity"/>
    <property type="evidence" value="ECO:0007669"/>
    <property type="project" value="UniProtKB-EC"/>
</dbReference>
<dbReference type="GO" id="GO:0003684">
    <property type="term" value="F:damaged DNA binding"/>
    <property type="evidence" value="ECO:0007669"/>
    <property type="project" value="InterPro"/>
</dbReference>
<dbReference type="GO" id="GO:0000703">
    <property type="term" value="F:oxidized pyrimidine nucleobase lesion DNA N-glycosylase activity"/>
    <property type="evidence" value="ECO:0007669"/>
    <property type="project" value="UniProtKB-UniRule"/>
</dbReference>
<dbReference type="GO" id="GO:0008270">
    <property type="term" value="F:zinc ion binding"/>
    <property type="evidence" value="ECO:0007669"/>
    <property type="project" value="UniProtKB-UniRule"/>
</dbReference>
<dbReference type="GO" id="GO:0006284">
    <property type="term" value="P:base-excision repair"/>
    <property type="evidence" value="ECO:0007669"/>
    <property type="project" value="InterPro"/>
</dbReference>
<dbReference type="CDD" id="cd08965">
    <property type="entry name" value="EcNei-like_N"/>
    <property type="match status" value="1"/>
</dbReference>
<dbReference type="FunFam" id="1.10.8.50:FF:000005">
    <property type="entry name" value="Endonuclease 8"/>
    <property type="match status" value="1"/>
</dbReference>
<dbReference type="FunFam" id="3.20.190.10:FF:000002">
    <property type="entry name" value="Endonuclease 8"/>
    <property type="match status" value="1"/>
</dbReference>
<dbReference type="Gene3D" id="1.10.8.50">
    <property type="match status" value="1"/>
</dbReference>
<dbReference type="Gene3D" id="3.20.190.10">
    <property type="entry name" value="MutM-like, N-terminal"/>
    <property type="match status" value="1"/>
</dbReference>
<dbReference type="HAMAP" id="MF_01253">
    <property type="entry name" value="Endonuclease_8"/>
    <property type="match status" value="1"/>
</dbReference>
<dbReference type="InterPro" id="IPR015886">
    <property type="entry name" value="DNA_glyclase/AP_lyase_DNA-bd"/>
</dbReference>
<dbReference type="InterPro" id="IPR015887">
    <property type="entry name" value="DNA_glyclase_Znf_dom_DNA_BS"/>
</dbReference>
<dbReference type="InterPro" id="IPR044091">
    <property type="entry name" value="EcNei-like_N"/>
</dbReference>
<dbReference type="InterPro" id="IPR023713">
    <property type="entry name" value="Endonuclease-VIII"/>
</dbReference>
<dbReference type="InterPro" id="IPR012319">
    <property type="entry name" value="FPG_cat"/>
</dbReference>
<dbReference type="InterPro" id="IPR035937">
    <property type="entry name" value="MutM-like_N-ter"/>
</dbReference>
<dbReference type="InterPro" id="IPR010979">
    <property type="entry name" value="Ribosomal_uS13-like_H2TH"/>
</dbReference>
<dbReference type="InterPro" id="IPR000214">
    <property type="entry name" value="Znf_DNA_glyclase/AP_lyase"/>
</dbReference>
<dbReference type="InterPro" id="IPR010663">
    <property type="entry name" value="Znf_FPG/IleRS"/>
</dbReference>
<dbReference type="NCBIfam" id="NF007763">
    <property type="entry name" value="PRK10445.1"/>
    <property type="match status" value="1"/>
</dbReference>
<dbReference type="PANTHER" id="PTHR42697">
    <property type="entry name" value="ENDONUCLEASE 8"/>
    <property type="match status" value="1"/>
</dbReference>
<dbReference type="PANTHER" id="PTHR42697:SF1">
    <property type="entry name" value="ENDONUCLEASE 8"/>
    <property type="match status" value="1"/>
</dbReference>
<dbReference type="Pfam" id="PF01149">
    <property type="entry name" value="Fapy_DNA_glyco"/>
    <property type="match status" value="1"/>
</dbReference>
<dbReference type="Pfam" id="PF06831">
    <property type="entry name" value="H2TH"/>
    <property type="match status" value="1"/>
</dbReference>
<dbReference type="Pfam" id="PF06827">
    <property type="entry name" value="zf-FPG_IleRS"/>
    <property type="match status" value="1"/>
</dbReference>
<dbReference type="SMART" id="SM00898">
    <property type="entry name" value="Fapy_DNA_glyco"/>
    <property type="match status" value="1"/>
</dbReference>
<dbReference type="SMART" id="SM01232">
    <property type="entry name" value="H2TH"/>
    <property type="match status" value="1"/>
</dbReference>
<dbReference type="SUPFAM" id="SSF57716">
    <property type="entry name" value="Glucocorticoid receptor-like (DNA-binding domain)"/>
    <property type="match status" value="1"/>
</dbReference>
<dbReference type="SUPFAM" id="SSF81624">
    <property type="entry name" value="N-terminal domain of MutM-like DNA repair proteins"/>
    <property type="match status" value="1"/>
</dbReference>
<dbReference type="SUPFAM" id="SSF46946">
    <property type="entry name" value="S13-like H2TH domain"/>
    <property type="match status" value="1"/>
</dbReference>
<dbReference type="PROSITE" id="PS51068">
    <property type="entry name" value="FPG_CAT"/>
    <property type="match status" value="1"/>
</dbReference>
<dbReference type="PROSITE" id="PS01242">
    <property type="entry name" value="ZF_FPG_1"/>
    <property type="match status" value="1"/>
</dbReference>
<dbReference type="PROSITE" id="PS51066">
    <property type="entry name" value="ZF_FPG_2"/>
    <property type="match status" value="1"/>
</dbReference>
<name>END8_SALPB</name>
<comment type="function">
    <text evidence="1">Involved in base excision repair of DNA damaged by oxidation or by mutagenic agents. Acts as a DNA glycosylase that recognizes and removes damaged bases. Has a preference for oxidized pyrimidines, such as thymine glycol, 5,6-dihydrouracil and 5,6-dihydrothymine. Has AP (apurinic/apyrimidinic) lyase activity and introduces nicks in the DNA strand. Cleaves the DNA backbone by beta-delta elimination to generate a single-strand break at the site of the removed base with both 3'- and 5'-phosphates.</text>
</comment>
<comment type="catalytic activity">
    <reaction evidence="1">
        <text>2'-deoxyribonucleotide-(2'-deoxyribose 5'-phosphate)-2'-deoxyribonucleotide-DNA = a 3'-end 2'-deoxyribonucleotide-(2,3-dehydro-2,3-deoxyribose 5'-phosphate)-DNA + a 5'-end 5'-phospho-2'-deoxyribonucleoside-DNA + H(+)</text>
        <dbReference type="Rhea" id="RHEA:66592"/>
        <dbReference type="Rhea" id="RHEA-COMP:13180"/>
        <dbReference type="Rhea" id="RHEA-COMP:16897"/>
        <dbReference type="Rhea" id="RHEA-COMP:17067"/>
        <dbReference type="ChEBI" id="CHEBI:15378"/>
        <dbReference type="ChEBI" id="CHEBI:136412"/>
        <dbReference type="ChEBI" id="CHEBI:157695"/>
        <dbReference type="ChEBI" id="CHEBI:167181"/>
        <dbReference type="EC" id="4.2.99.18"/>
    </reaction>
</comment>
<comment type="cofactor">
    <cofactor evidence="1">
        <name>Zn(2+)</name>
        <dbReference type="ChEBI" id="CHEBI:29105"/>
    </cofactor>
    <text evidence="1">Binds 1 zinc ion per subunit.</text>
</comment>
<comment type="similarity">
    <text evidence="1">Belongs to the FPG family.</text>
</comment>
<gene>
    <name evidence="1" type="primary">nei</name>
    <name type="ordered locus">SPAB_02805</name>
</gene>
<keyword id="KW-0227">DNA damage</keyword>
<keyword id="KW-0234">DNA repair</keyword>
<keyword id="KW-0238">DNA-binding</keyword>
<keyword id="KW-0326">Glycosidase</keyword>
<keyword id="KW-0378">Hydrolase</keyword>
<keyword id="KW-0456">Lyase</keyword>
<keyword id="KW-0479">Metal-binding</keyword>
<keyword id="KW-0511">Multifunctional enzyme</keyword>
<keyword id="KW-0862">Zinc</keyword>
<keyword id="KW-0863">Zinc-finger</keyword>
<sequence length="263" mass="29780">MPEGPEIRRAADNLEAAIKGKPLTDVWFAFAQLKPYESQLTGQLVTRIETRGKALLTHFSNGLTLYSHNQLYGVWRVIDTGEIPQTTRILRVRLQTADKTILLYSASDIEMLTAEQLTTHPFLQRVGPDVLDARLTPEEVKARLLSPRFCNRQFSGLLLDQAFLAGLGNYLRVEILWQVGLTGQHKAKDLNEAQLNALSHALLDIPRLSYTTRGQADENKHHGALFRFKVFHRDGEACERCGGIIEKTTLSSRPFYWCPHCQK</sequence>